<comment type="function">
    <text evidence="1">Specifically methylates the N4 position of cytidine in position 1402 (C1402) of 16S rRNA.</text>
</comment>
<comment type="catalytic activity">
    <reaction evidence="1">
        <text>cytidine(1402) in 16S rRNA + S-adenosyl-L-methionine = N(4)-methylcytidine(1402) in 16S rRNA + S-adenosyl-L-homocysteine + H(+)</text>
        <dbReference type="Rhea" id="RHEA:42928"/>
        <dbReference type="Rhea" id="RHEA-COMP:10286"/>
        <dbReference type="Rhea" id="RHEA-COMP:10287"/>
        <dbReference type="ChEBI" id="CHEBI:15378"/>
        <dbReference type="ChEBI" id="CHEBI:57856"/>
        <dbReference type="ChEBI" id="CHEBI:59789"/>
        <dbReference type="ChEBI" id="CHEBI:74506"/>
        <dbReference type="ChEBI" id="CHEBI:82748"/>
        <dbReference type="EC" id="2.1.1.199"/>
    </reaction>
</comment>
<comment type="subcellular location">
    <subcellularLocation>
        <location evidence="1">Cytoplasm</location>
    </subcellularLocation>
</comment>
<comment type="similarity">
    <text evidence="1">Belongs to the methyltransferase superfamily. RsmH family.</text>
</comment>
<proteinExistence type="inferred from homology"/>
<name>RSMH_LISMO</name>
<dbReference type="EC" id="2.1.1.199" evidence="1"/>
<dbReference type="EMBL" id="AL591982">
    <property type="protein sequence ID" value="CAD00119.1"/>
    <property type="molecule type" value="Genomic_DNA"/>
</dbReference>
<dbReference type="PIR" id="AI1329">
    <property type="entry name" value="AI1329"/>
</dbReference>
<dbReference type="RefSeq" id="NP_465565.1">
    <property type="nucleotide sequence ID" value="NC_003210.1"/>
</dbReference>
<dbReference type="RefSeq" id="WP_003731975.1">
    <property type="nucleotide sequence ID" value="NZ_CP149495.1"/>
</dbReference>
<dbReference type="SMR" id="Q8Y5L7"/>
<dbReference type="STRING" id="169963.gene:17594726"/>
<dbReference type="PaxDb" id="169963-lmo2041"/>
<dbReference type="EnsemblBacteria" id="CAD00119">
    <property type="protein sequence ID" value="CAD00119"/>
    <property type="gene ID" value="CAD00119"/>
</dbReference>
<dbReference type="GeneID" id="984957"/>
<dbReference type="KEGG" id="lmo:lmo2041"/>
<dbReference type="PATRIC" id="fig|169963.11.peg.2089"/>
<dbReference type="eggNOG" id="COG0275">
    <property type="taxonomic scope" value="Bacteria"/>
</dbReference>
<dbReference type="HOGENOM" id="CLU_038422_2_0_9"/>
<dbReference type="OrthoDB" id="9806637at2"/>
<dbReference type="PhylomeDB" id="Q8Y5L7"/>
<dbReference type="BioCyc" id="LMON169963:LMO2041-MONOMER"/>
<dbReference type="Proteomes" id="UP000000817">
    <property type="component" value="Chromosome"/>
</dbReference>
<dbReference type="GO" id="GO:0005737">
    <property type="term" value="C:cytoplasm"/>
    <property type="evidence" value="ECO:0000318"/>
    <property type="project" value="GO_Central"/>
</dbReference>
<dbReference type="GO" id="GO:0071424">
    <property type="term" value="F:rRNA (cytosine-N4-)-methyltransferase activity"/>
    <property type="evidence" value="ECO:0000318"/>
    <property type="project" value="GO_Central"/>
</dbReference>
<dbReference type="GO" id="GO:0070475">
    <property type="term" value="P:rRNA base methylation"/>
    <property type="evidence" value="ECO:0000318"/>
    <property type="project" value="GO_Central"/>
</dbReference>
<dbReference type="FunFam" id="1.10.150.170:FF:000001">
    <property type="entry name" value="Ribosomal RNA small subunit methyltransferase H"/>
    <property type="match status" value="1"/>
</dbReference>
<dbReference type="Gene3D" id="1.10.150.170">
    <property type="entry name" value="Putative methyltransferase TM0872, insert domain"/>
    <property type="match status" value="1"/>
</dbReference>
<dbReference type="Gene3D" id="3.40.50.150">
    <property type="entry name" value="Vaccinia Virus protein VP39"/>
    <property type="match status" value="1"/>
</dbReference>
<dbReference type="HAMAP" id="MF_01007">
    <property type="entry name" value="16SrRNA_methyltr_H"/>
    <property type="match status" value="1"/>
</dbReference>
<dbReference type="InterPro" id="IPR002903">
    <property type="entry name" value="RsmH"/>
</dbReference>
<dbReference type="InterPro" id="IPR023397">
    <property type="entry name" value="SAM-dep_MeTrfase_MraW_recog"/>
</dbReference>
<dbReference type="InterPro" id="IPR029063">
    <property type="entry name" value="SAM-dependent_MTases_sf"/>
</dbReference>
<dbReference type="NCBIfam" id="TIGR00006">
    <property type="entry name" value="16S rRNA (cytosine(1402)-N(4))-methyltransferase RsmH"/>
    <property type="match status" value="1"/>
</dbReference>
<dbReference type="PANTHER" id="PTHR11265:SF0">
    <property type="entry name" value="12S RRNA N4-METHYLCYTIDINE METHYLTRANSFERASE"/>
    <property type="match status" value="1"/>
</dbReference>
<dbReference type="PANTHER" id="PTHR11265">
    <property type="entry name" value="S-ADENOSYL-METHYLTRANSFERASE MRAW"/>
    <property type="match status" value="1"/>
</dbReference>
<dbReference type="Pfam" id="PF01795">
    <property type="entry name" value="Methyltransf_5"/>
    <property type="match status" value="1"/>
</dbReference>
<dbReference type="PIRSF" id="PIRSF004486">
    <property type="entry name" value="MraW"/>
    <property type="match status" value="1"/>
</dbReference>
<dbReference type="SUPFAM" id="SSF81799">
    <property type="entry name" value="Putative methyltransferase TM0872, insert domain"/>
    <property type="match status" value="1"/>
</dbReference>
<dbReference type="SUPFAM" id="SSF53335">
    <property type="entry name" value="S-adenosyl-L-methionine-dependent methyltransferases"/>
    <property type="match status" value="1"/>
</dbReference>
<evidence type="ECO:0000255" key="1">
    <source>
        <dbReference type="HAMAP-Rule" id="MF_01007"/>
    </source>
</evidence>
<gene>
    <name evidence="1" type="primary">rsmH</name>
    <name type="synonym">mraW</name>
    <name type="ordered locus">lmo2041</name>
</gene>
<organism>
    <name type="scientific">Listeria monocytogenes serovar 1/2a (strain ATCC BAA-679 / EGD-e)</name>
    <dbReference type="NCBI Taxonomy" id="169963"/>
    <lineage>
        <taxon>Bacteria</taxon>
        <taxon>Bacillati</taxon>
        <taxon>Bacillota</taxon>
        <taxon>Bacilli</taxon>
        <taxon>Bacillales</taxon>
        <taxon>Listeriaceae</taxon>
        <taxon>Listeria</taxon>
    </lineage>
</organism>
<keyword id="KW-0963">Cytoplasm</keyword>
<keyword id="KW-0489">Methyltransferase</keyword>
<keyword id="KW-1185">Reference proteome</keyword>
<keyword id="KW-0698">rRNA processing</keyword>
<keyword id="KW-0949">S-adenosyl-L-methionine</keyword>
<keyword id="KW-0808">Transferase</keyword>
<reference key="1">
    <citation type="journal article" date="2001" name="Science">
        <title>Comparative genomics of Listeria species.</title>
        <authorList>
            <person name="Glaser P."/>
            <person name="Frangeul L."/>
            <person name="Buchrieser C."/>
            <person name="Rusniok C."/>
            <person name="Amend A."/>
            <person name="Baquero F."/>
            <person name="Berche P."/>
            <person name="Bloecker H."/>
            <person name="Brandt P."/>
            <person name="Chakraborty T."/>
            <person name="Charbit A."/>
            <person name="Chetouani F."/>
            <person name="Couve E."/>
            <person name="de Daruvar A."/>
            <person name="Dehoux P."/>
            <person name="Domann E."/>
            <person name="Dominguez-Bernal G."/>
            <person name="Duchaud E."/>
            <person name="Durant L."/>
            <person name="Dussurget O."/>
            <person name="Entian K.-D."/>
            <person name="Fsihi H."/>
            <person name="Garcia-del Portillo F."/>
            <person name="Garrido P."/>
            <person name="Gautier L."/>
            <person name="Goebel W."/>
            <person name="Gomez-Lopez N."/>
            <person name="Hain T."/>
            <person name="Hauf J."/>
            <person name="Jackson D."/>
            <person name="Jones L.-M."/>
            <person name="Kaerst U."/>
            <person name="Kreft J."/>
            <person name="Kuhn M."/>
            <person name="Kunst F."/>
            <person name="Kurapkat G."/>
            <person name="Madueno E."/>
            <person name="Maitournam A."/>
            <person name="Mata Vicente J."/>
            <person name="Ng E."/>
            <person name="Nedjari H."/>
            <person name="Nordsiek G."/>
            <person name="Novella S."/>
            <person name="de Pablos B."/>
            <person name="Perez-Diaz J.-C."/>
            <person name="Purcell R."/>
            <person name="Remmel B."/>
            <person name="Rose M."/>
            <person name="Schlueter T."/>
            <person name="Simoes N."/>
            <person name="Tierrez A."/>
            <person name="Vazquez-Boland J.-A."/>
            <person name="Voss H."/>
            <person name="Wehland J."/>
            <person name="Cossart P."/>
        </authorList>
    </citation>
    <scope>NUCLEOTIDE SEQUENCE [LARGE SCALE GENOMIC DNA]</scope>
    <source>
        <strain>ATCC BAA-679 / EGD-e</strain>
    </source>
</reference>
<protein>
    <recommendedName>
        <fullName evidence="1">Ribosomal RNA small subunit methyltransferase H</fullName>
        <ecNumber evidence="1">2.1.1.199</ecNumber>
    </recommendedName>
    <alternativeName>
        <fullName evidence="1">16S rRNA m(4)C1402 methyltransferase</fullName>
    </alternativeName>
    <alternativeName>
        <fullName evidence="1">rRNA (cytosine-N(4)-)-methyltransferase RsmH</fullName>
    </alternativeName>
</protein>
<sequence>MFKHETVLLHETVDMLEVKPDGIYVDATLGGAGHSEYLLNKLNEKGHLFAFDQDQTAIDNAKIKLADYSDKVTFIKANFRDMKEALNERGIEAVDGILYDLGVSSPQLDERERGFSYHQDAALDMRMDQEQELTAKTVVNEWSYQDLIRIFFQYGEEKFSKQIAREIERRREVKPIETTGELVDIIKTAIPAPARRKGGHPGKRTFQAIRIAVNDELGAVEDSLEKALTLIKPGGRISVITFHSLEDRITKQLFQEATKGPDLPPGLPVIPDEYKPDFKLATRKPIVPSEEELEQNNRARSAKLRVIEKIIK</sequence>
<feature type="chain" id="PRO_0000108653" description="Ribosomal RNA small subunit methyltransferase H">
    <location>
        <begin position="1"/>
        <end position="312"/>
    </location>
</feature>
<feature type="binding site" evidence="1">
    <location>
        <begin position="32"/>
        <end position="34"/>
    </location>
    <ligand>
        <name>S-adenosyl-L-methionine</name>
        <dbReference type="ChEBI" id="CHEBI:59789"/>
    </ligand>
</feature>
<feature type="binding site" evidence="1">
    <location>
        <position position="52"/>
    </location>
    <ligand>
        <name>S-adenosyl-L-methionine</name>
        <dbReference type="ChEBI" id="CHEBI:59789"/>
    </ligand>
</feature>
<feature type="binding site" evidence="1">
    <location>
        <position position="79"/>
    </location>
    <ligand>
        <name>S-adenosyl-L-methionine</name>
        <dbReference type="ChEBI" id="CHEBI:59789"/>
    </ligand>
</feature>
<feature type="binding site" evidence="1">
    <location>
        <position position="100"/>
    </location>
    <ligand>
        <name>S-adenosyl-L-methionine</name>
        <dbReference type="ChEBI" id="CHEBI:59789"/>
    </ligand>
</feature>
<feature type="binding site" evidence="1">
    <location>
        <position position="107"/>
    </location>
    <ligand>
        <name>S-adenosyl-L-methionine</name>
        <dbReference type="ChEBI" id="CHEBI:59789"/>
    </ligand>
</feature>
<accession>Q8Y5L7</accession>